<accession>A5I7J8</accession>
<accession>A7G8T0</accession>
<dbReference type="EMBL" id="CP000727">
    <property type="protein sequence ID" value="ABS36319.1"/>
    <property type="molecule type" value="Genomic_DNA"/>
</dbReference>
<dbReference type="EMBL" id="AM412317">
    <property type="protein sequence ID" value="CAL85033.1"/>
    <property type="molecule type" value="Genomic_DNA"/>
</dbReference>
<dbReference type="RefSeq" id="WP_003357691.1">
    <property type="nucleotide sequence ID" value="NC_009698.1"/>
</dbReference>
<dbReference type="RefSeq" id="YP_001255954.1">
    <property type="nucleotide sequence ID" value="NC_009495.1"/>
</dbReference>
<dbReference type="RefSeq" id="YP_001389195.1">
    <property type="nucleotide sequence ID" value="NC_009698.1"/>
</dbReference>
<dbReference type="SMR" id="A5I7J8"/>
<dbReference type="GeneID" id="92940242"/>
<dbReference type="KEGG" id="cbh:CLC_3417"/>
<dbReference type="KEGG" id="cbo:CBO3472A"/>
<dbReference type="PATRIC" id="fig|413999.7.peg.3449"/>
<dbReference type="HOGENOM" id="CLU_158491_5_2_9"/>
<dbReference type="PRO" id="PR:A5I7J8"/>
<dbReference type="Proteomes" id="UP000001986">
    <property type="component" value="Chromosome"/>
</dbReference>
<dbReference type="GO" id="GO:0022625">
    <property type="term" value="C:cytosolic large ribosomal subunit"/>
    <property type="evidence" value="ECO:0000318"/>
    <property type="project" value="GO_Central"/>
</dbReference>
<dbReference type="GO" id="GO:0003735">
    <property type="term" value="F:structural constituent of ribosome"/>
    <property type="evidence" value="ECO:0007669"/>
    <property type="project" value="InterPro"/>
</dbReference>
<dbReference type="GO" id="GO:0006412">
    <property type="term" value="P:translation"/>
    <property type="evidence" value="ECO:0007669"/>
    <property type="project" value="UniProtKB-UniRule"/>
</dbReference>
<dbReference type="CDD" id="cd00427">
    <property type="entry name" value="Ribosomal_L29_HIP"/>
    <property type="match status" value="1"/>
</dbReference>
<dbReference type="FunFam" id="1.10.287.310:FF:000001">
    <property type="entry name" value="50S ribosomal protein L29"/>
    <property type="match status" value="1"/>
</dbReference>
<dbReference type="Gene3D" id="1.10.287.310">
    <property type="match status" value="1"/>
</dbReference>
<dbReference type="HAMAP" id="MF_00374">
    <property type="entry name" value="Ribosomal_uL29"/>
    <property type="match status" value="1"/>
</dbReference>
<dbReference type="InterPro" id="IPR050063">
    <property type="entry name" value="Ribosomal_protein_uL29"/>
</dbReference>
<dbReference type="InterPro" id="IPR001854">
    <property type="entry name" value="Ribosomal_uL29"/>
</dbReference>
<dbReference type="InterPro" id="IPR018254">
    <property type="entry name" value="Ribosomal_uL29_CS"/>
</dbReference>
<dbReference type="InterPro" id="IPR036049">
    <property type="entry name" value="Ribosomal_uL29_sf"/>
</dbReference>
<dbReference type="NCBIfam" id="TIGR00012">
    <property type="entry name" value="L29"/>
    <property type="match status" value="1"/>
</dbReference>
<dbReference type="PANTHER" id="PTHR10916">
    <property type="entry name" value="60S RIBOSOMAL PROTEIN L35/50S RIBOSOMAL PROTEIN L29"/>
    <property type="match status" value="1"/>
</dbReference>
<dbReference type="PANTHER" id="PTHR10916:SF0">
    <property type="entry name" value="LARGE RIBOSOMAL SUBUNIT PROTEIN UL29C"/>
    <property type="match status" value="1"/>
</dbReference>
<dbReference type="Pfam" id="PF00831">
    <property type="entry name" value="Ribosomal_L29"/>
    <property type="match status" value="1"/>
</dbReference>
<dbReference type="SUPFAM" id="SSF46561">
    <property type="entry name" value="Ribosomal protein L29 (L29p)"/>
    <property type="match status" value="1"/>
</dbReference>
<dbReference type="PROSITE" id="PS00579">
    <property type="entry name" value="RIBOSOMAL_L29"/>
    <property type="match status" value="1"/>
</dbReference>
<sequence>MKARELQELRKSSPQELQSKLNDLKAELFNLRFQLATGQLENPMRIREVKKSIAQIKTILREEEIRAYQQ</sequence>
<gene>
    <name evidence="1" type="primary">rpmC</name>
    <name type="ordered locus">CBO3472.1</name>
    <name type="ordered locus">CLC_3417</name>
    <name type="ORF">CBO3472A</name>
</gene>
<organism>
    <name type="scientific">Clostridium botulinum (strain Hall / ATCC 3502 / NCTC 13319 / Type A)</name>
    <dbReference type="NCBI Taxonomy" id="441771"/>
    <lineage>
        <taxon>Bacteria</taxon>
        <taxon>Bacillati</taxon>
        <taxon>Bacillota</taxon>
        <taxon>Clostridia</taxon>
        <taxon>Eubacteriales</taxon>
        <taxon>Clostridiaceae</taxon>
        <taxon>Clostridium</taxon>
    </lineage>
</organism>
<feature type="chain" id="PRO_1000007457" description="Large ribosomal subunit protein uL29">
    <location>
        <begin position="1"/>
        <end position="70"/>
    </location>
</feature>
<proteinExistence type="inferred from homology"/>
<keyword id="KW-1185">Reference proteome</keyword>
<keyword id="KW-0687">Ribonucleoprotein</keyword>
<keyword id="KW-0689">Ribosomal protein</keyword>
<reference key="1">
    <citation type="journal article" date="2007" name="Genome Res.">
        <title>Genome sequence of a proteolytic (Group I) Clostridium botulinum strain Hall A and comparative analysis of the clostridial genomes.</title>
        <authorList>
            <person name="Sebaihia M."/>
            <person name="Peck M.W."/>
            <person name="Minton N.P."/>
            <person name="Thomson N.R."/>
            <person name="Holden M.T.G."/>
            <person name="Mitchell W.J."/>
            <person name="Carter A.T."/>
            <person name="Bentley S.D."/>
            <person name="Mason D.R."/>
            <person name="Crossman L."/>
            <person name="Paul C.J."/>
            <person name="Ivens A."/>
            <person name="Wells-Bennik M.H.J."/>
            <person name="Davis I.J."/>
            <person name="Cerdeno-Tarraga A.M."/>
            <person name="Churcher C."/>
            <person name="Quail M.A."/>
            <person name="Chillingworth T."/>
            <person name="Feltwell T."/>
            <person name="Fraser A."/>
            <person name="Goodhead I."/>
            <person name="Hance Z."/>
            <person name="Jagels K."/>
            <person name="Larke N."/>
            <person name="Maddison M."/>
            <person name="Moule S."/>
            <person name="Mungall K."/>
            <person name="Norbertczak H."/>
            <person name="Rabbinowitsch E."/>
            <person name="Sanders M."/>
            <person name="Simmonds M."/>
            <person name="White B."/>
            <person name="Whithead S."/>
            <person name="Parkhill J."/>
        </authorList>
    </citation>
    <scope>NUCLEOTIDE SEQUENCE [LARGE SCALE GENOMIC DNA]</scope>
    <source>
        <strain>Hall / ATCC 3502 / NCTC 13319 / Type A</strain>
    </source>
</reference>
<reference key="2">
    <citation type="journal article" date="2007" name="PLoS ONE">
        <title>Analysis of the neurotoxin complex genes in Clostridium botulinum A1-A4 and B1 strains: BoNT/A3, /Ba4 and /B1 clusters are located within plasmids.</title>
        <authorList>
            <person name="Smith T.J."/>
            <person name="Hill K.K."/>
            <person name="Foley B.T."/>
            <person name="Detter J.C."/>
            <person name="Munk A.C."/>
            <person name="Bruce D.C."/>
            <person name="Doggett N.A."/>
            <person name="Smith L.A."/>
            <person name="Marks J.D."/>
            <person name="Xie G."/>
            <person name="Brettin T.S."/>
        </authorList>
    </citation>
    <scope>NUCLEOTIDE SEQUENCE [LARGE SCALE GENOMIC DNA]</scope>
    <source>
        <strain>Hall / ATCC 3502 / NCTC 13319 / Type A</strain>
    </source>
</reference>
<comment type="similarity">
    <text evidence="1">Belongs to the universal ribosomal protein uL29 family.</text>
</comment>
<evidence type="ECO:0000255" key="1">
    <source>
        <dbReference type="HAMAP-Rule" id="MF_00374"/>
    </source>
</evidence>
<evidence type="ECO:0000305" key="2"/>
<name>RL29_CLOBH</name>
<protein>
    <recommendedName>
        <fullName evidence="1">Large ribosomal subunit protein uL29</fullName>
    </recommendedName>
    <alternativeName>
        <fullName evidence="2">50S ribosomal protein L29</fullName>
    </alternativeName>
</protein>